<accession>B9K6Z3</accession>
<dbReference type="EC" id="5.3.1.24" evidence="1"/>
<dbReference type="EMBL" id="CP000916">
    <property type="protein sequence ID" value="ACM22726.1"/>
    <property type="molecule type" value="Genomic_DNA"/>
</dbReference>
<dbReference type="RefSeq" id="WP_015919045.1">
    <property type="nucleotide sequence ID" value="NC_011978.1"/>
</dbReference>
<dbReference type="SMR" id="B9K6Z3"/>
<dbReference type="STRING" id="309803.CTN_0550"/>
<dbReference type="KEGG" id="tna:CTN_0550"/>
<dbReference type="eggNOG" id="COG0135">
    <property type="taxonomic scope" value="Bacteria"/>
</dbReference>
<dbReference type="HOGENOM" id="CLU_076364_2_0_0"/>
<dbReference type="UniPathway" id="UPA00035">
    <property type="reaction ID" value="UER00042"/>
</dbReference>
<dbReference type="Proteomes" id="UP000000445">
    <property type="component" value="Chromosome"/>
</dbReference>
<dbReference type="GO" id="GO:0004640">
    <property type="term" value="F:phosphoribosylanthranilate isomerase activity"/>
    <property type="evidence" value="ECO:0007669"/>
    <property type="project" value="UniProtKB-UniRule"/>
</dbReference>
<dbReference type="GO" id="GO:0000162">
    <property type="term" value="P:L-tryptophan biosynthetic process"/>
    <property type="evidence" value="ECO:0007669"/>
    <property type="project" value="UniProtKB-UniRule"/>
</dbReference>
<dbReference type="CDD" id="cd00405">
    <property type="entry name" value="PRAI"/>
    <property type="match status" value="1"/>
</dbReference>
<dbReference type="FunFam" id="3.20.20.70:FF:000075">
    <property type="entry name" value="Tryptophan biosynthesis protein TRP1"/>
    <property type="match status" value="1"/>
</dbReference>
<dbReference type="Gene3D" id="3.20.20.70">
    <property type="entry name" value="Aldolase class I"/>
    <property type="match status" value="1"/>
</dbReference>
<dbReference type="HAMAP" id="MF_00135">
    <property type="entry name" value="PRAI"/>
    <property type="match status" value="1"/>
</dbReference>
<dbReference type="InterPro" id="IPR013785">
    <property type="entry name" value="Aldolase_TIM"/>
</dbReference>
<dbReference type="InterPro" id="IPR001240">
    <property type="entry name" value="PRAI_dom"/>
</dbReference>
<dbReference type="InterPro" id="IPR011060">
    <property type="entry name" value="RibuloseP-bd_barrel"/>
</dbReference>
<dbReference type="InterPro" id="IPR044643">
    <property type="entry name" value="TrpF_fam"/>
</dbReference>
<dbReference type="NCBIfam" id="NF002298">
    <property type="entry name" value="PRK01222.1-4"/>
    <property type="match status" value="1"/>
</dbReference>
<dbReference type="PANTHER" id="PTHR42894">
    <property type="entry name" value="N-(5'-PHOSPHORIBOSYL)ANTHRANILATE ISOMERASE"/>
    <property type="match status" value="1"/>
</dbReference>
<dbReference type="PANTHER" id="PTHR42894:SF1">
    <property type="entry name" value="N-(5'-PHOSPHORIBOSYL)ANTHRANILATE ISOMERASE"/>
    <property type="match status" value="1"/>
</dbReference>
<dbReference type="Pfam" id="PF00697">
    <property type="entry name" value="PRAI"/>
    <property type="match status" value="1"/>
</dbReference>
<dbReference type="SUPFAM" id="SSF51366">
    <property type="entry name" value="Ribulose-phoshate binding barrel"/>
    <property type="match status" value="1"/>
</dbReference>
<reference key="1">
    <citation type="submission" date="2007-11" db="EMBL/GenBank/DDBJ databases">
        <title>The genome sequence of the hyperthermophilic bacterium Thermotoga neapolitana.</title>
        <authorList>
            <person name="Lim S.K."/>
            <person name="Kim J.S."/>
            <person name="Cha S.H."/>
            <person name="Park B.C."/>
            <person name="Lee D.S."/>
            <person name="Tae H.S."/>
            <person name="Kim S.-J."/>
            <person name="Kim J.J."/>
            <person name="Park K.J."/>
            <person name="Lee S.Y."/>
        </authorList>
    </citation>
    <scope>NUCLEOTIDE SEQUENCE [LARGE SCALE GENOMIC DNA]</scope>
    <source>
        <strain>ATCC 49049 / DSM 4359 / NBRC 107923 / NS-E</strain>
    </source>
</reference>
<comment type="catalytic activity">
    <reaction evidence="1">
        <text>N-(5-phospho-beta-D-ribosyl)anthranilate = 1-(2-carboxyphenylamino)-1-deoxy-D-ribulose 5-phosphate</text>
        <dbReference type="Rhea" id="RHEA:21540"/>
        <dbReference type="ChEBI" id="CHEBI:18277"/>
        <dbReference type="ChEBI" id="CHEBI:58613"/>
        <dbReference type="EC" id="5.3.1.24"/>
    </reaction>
</comment>
<comment type="pathway">
    <text evidence="1">Amino-acid biosynthesis; L-tryptophan biosynthesis; L-tryptophan from chorismate: step 3/5.</text>
</comment>
<comment type="similarity">
    <text evidence="1">Belongs to the TrpF family.</text>
</comment>
<organism>
    <name type="scientific">Thermotoga neapolitana (strain ATCC 49049 / DSM 4359 / NBRC 107923 / NS-E)</name>
    <dbReference type="NCBI Taxonomy" id="309803"/>
    <lineage>
        <taxon>Bacteria</taxon>
        <taxon>Thermotogati</taxon>
        <taxon>Thermotogota</taxon>
        <taxon>Thermotogae</taxon>
        <taxon>Thermotogales</taxon>
        <taxon>Thermotogaceae</taxon>
        <taxon>Thermotoga</taxon>
    </lineage>
</organism>
<protein>
    <recommendedName>
        <fullName evidence="1">N-(5'-phosphoribosyl)anthranilate isomerase</fullName>
        <shortName evidence="1">PRAI</shortName>
        <ecNumber evidence="1">5.3.1.24</ecNumber>
    </recommendedName>
</protein>
<gene>
    <name evidence="1" type="primary">trpF</name>
    <name type="ordered locus">CTN_0550</name>
</gene>
<proteinExistence type="inferred from homology"/>
<name>TRPF_THENN</name>
<keyword id="KW-0028">Amino-acid biosynthesis</keyword>
<keyword id="KW-0057">Aromatic amino acid biosynthesis</keyword>
<keyword id="KW-0413">Isomerase</keyword>
<keyword id="KW-0822">Tryptophan biosynthesis</keyword>
<sequence length="205" mass="22914">MVRVKICGITNLEDALFSVESGADAVGFVFYSKSKRYVSPEKAREISLNLPPFVFRVGVFVNESLESVLDIAFHAGLNAVQLHGDESVEFCERLNEKIMVIKAVGISEEQDVRRALEYRKFPVLLDTKVSGYGGSGKVFNWSVVLPYRDQFRYLILSGGLNPRNVERAIEMVRPFAVDVSSGVEISPGKKDHNLVREFIKKAKGL</sequence>
<feature type="chain" id="PRO_1000197134" description="N-(5'-phosphoribosyl)anthranilate isomerase">
    <location>
        <begin position="1"/>
        <end position="205"/>
    </location>
</feature>
<evidence type="ECO:0000255" key="1">
    <source>
        <dbReference type="HAMAP-Rule" id="MF_00135"/>
    </source>
</evidence>